<accession>Q8YT32</accession>
<gene>
    <name evidence="1" type="primary">ruvB</name>
    <name type="ordered locus">all2894</name>
</gene>
<name>RUVB_NOSS1</name>
<feature type="chain" id="PRO_0000165483" description="Holliday junction branch migration complex subunit RuvB">
    <location>
        <begin position="1"/>
        <end position="366"/>
    </location>
</feature>
<feature type="region of interest" description="Disordered" evidence="2">
    <location>
        <begin position="1"/>
        <end position="49"/>
    </location>
</feature>
<feature type="region of interest" description="Large ATPase domain (RuvB-L)" evidence="1">
    <location>
        <begin position="13"/>
        <end position="210"/>
    </location>
</feature>
<feature type="region of interest" description="Small ATPAse domain (RuvB-S)" evidence="1">
    <location>
        <begin position="211"/>
        <end position="281"/>
    </location>
</feature>
<feature type="region of interest" description="Head domain (RuvB-H)" evidence="1">
    <location>
        <begin position="284"/>
        <end position="366"/>
    </location>
</feature>
<feature type="binding site" evidence="1">
    <location>
        <position position="49"/>
    </location>
    <ligand>
        <name>ATP</name>
        <dbReference type="ChEBI" id="CHEBI:30616"/>
    </ligand>
</feature>
<feature type="binding site" evidence="1">
    <location>
        <position position="50"/>
    </location>
    <ligand>
        <name>ATP</name>
        <dbReference type="ChEBI" id="CHEBI:30616"/>
    </ligand>
</feature>
<feature type="binding site" evidence="1">
    <location>
        <position position="91"/>
    </location>
    <ligand>
        <name>ATP</name>
        <dbReference type="ChEBI" id="CHEBI:30616"/>
    </ligand>
</feature>
<feature type="binding site" evidence="1">
    <location>
        <position position="94"/>
    </location>
    <ligand>
        <name>ATP</name>
        <dbReference type="ChEBI" id="CHEBI:30616"/>
    </ligand>
</feature>
<feature type="binding site" evidence="1">
    <location>
        <position position="95"/>
    </location>
    <ligand>
        <name>ATP</name>
        <dbReference type="ChEBI" id="CHEBI:30616"/>
    </ligand>
</feature>
<feature type="binding site" evidence="1">
    <location>
        <position position="95"/>
    </location>
    <ligand>
        <name>Mg(2+)</name>
        <dbReference type="ChEBI" id="CHEBI:18420"/>
    </ligand>
</feature>
<feature type="binding site" evidence="1">
    <location>
        <position position="96"/>
    </location>
    <ligand>
        <name>ATP</name>
        <dbReference type="ChEBI" id="CHEBI:30616"/>
    </ligand>
</feature>
<feature type="binding site" evidence="1">
    <location>
        <begin position="157"/>
        <end position="159"/>
    </location>
    <ligand>
        <name>ATP</name>
        <dbReference type="ChEBI" id="CHEBI:30616"/>
    </ligand>
</feature>
<feature type="binding site" evidence="1">
    <location>
        <position position="200"/>
    </location>
    <ligand>
        <name>ATP</name>
        <dbReference type="ChEBI" id="CHEBI:30616"/>
    </ligand>
</feature>
<feature type="binding site" evidence="1">
    <location>
        <position position="210"/>
    </location>
    <ligand>
        <name>ATP</name>
        <dbReference type="ChEBI" id="CHEBI:30616"/>
    </ligand>
</feature>
<feature type="binding site" evidence="1">
    <location>
        <position position="247"/>
    </location>
    <ligand>
        <name>ATP</name>
        <dbReference type="ChEBI" id="CHEBI:30616"/>
    </ligand>
</feature>
<feature type="binding site" evidence="1">
    <location>
        <position position="339"/>
    </location>
    <ligand>
        <name>DNA</name>
        <dbReference type="ChEBI" id="CHEBI:16991"/>
    </ligand>
</feature>
<feature type="binding site" evidence="1">
    <location>
        <position position="344"/>
    </location>
    <ligand>
        <name>DNA</name>
        <dbReference type="ChEBI" id="CHEBI:16991"/>
    </ligand>
</feature>
<comment type="function">
    <text evidence="1">The RuvA-RuvB-RuvC complex processes Holliday junction (HJ) DNA during genetic recombination and DNA repair, while the RuvA-RuvB complex plays an important role in the rescue of blocked DNA replication forks via replication fork reversal (RFR). RuvA specifically binds to HJ cruciform DNA, conferring on it an open structure. The RuvB hexamer acts as an ATP-dependent pump, pulling dsDNA into and through the RuvAB complex. RuvB forms 2 homohexamers on either side of HJ DNA bound by 1 or 2 RuvA tetramers; 4 subunits per hexamer contact DNA at a time. Coordinated motions by a converter formed by DNA-disengaged RuvB subunits stimulates ATP hydrolysis and nucleotide exchange. Immobilization of the converter enables RuvB to convert the ATP-contained energy into a lever motion, pulling 2 nucleotides of DNA out of the RuvA tetramer per ATP hydrolyzed, thus driving DNA branch migration. The RuvB motors rotate together with the DNA substrate, which together with the progressing nucleotide cycle form the mechanistic basis for DNA recombination by continuous HJ branch migration. Branch migration allows RuvC to scan DNA until it finds its consensus sequence, where it cleaves and resolves cruciform DNA.</text>
</comment>
<comment type="catalytic activity">
    <reaction evidence="1">
        <text>ATP + H2O = ADP + phosphate + H(+)</text>
        <dbReference type="Rhea" id="RHEA:13065"/>
        <dbReference type="ChEBI" id="CHEBI:15377"/>
        <dbReference type="ChEBI" id="CHEBI:15378"/>
        <dbReference type="ChEBI" id="CHEBI:30616"/>
        <dbReference type="ChEBI" id="CHEBI:43474"/>
        <dbReference type="ChEBI" id="CHEBI:456216"/>
    </reaction>
</comment>
<comment type="subunit">
    <text evidence="1">Homohexamer. Forms an RuvA(8)-RuvB(12)-Holliday junction (HJ) complex. HJ DNA is sandwiched between 2 RuvA tetramers; dsDNA enters through RuvA and exits via RuvB. An RuvB hexamer assembles on each DNA strand where it exits the tetramer. Each RuvB hexamer is contacted by two RuvA subunits (via domain III) on 2 adjacent RuvB subunits; this complex drives branch migration. In the full resolvosome a probable DNA-RuvA(4)-RuvB(12)-RuvC(2) complex forms which resolves the HJ.</text>
</comment>
<comment type="subcellular location">
    <subcellularLocation>
        <location evidence="1">Cytoplasm</location>
    </subcellularLocation>
</comment>
<comment type="domain">
    <text evidence="1">Has 3 domains, the large (RuvB-L) and small ATPase (RuvB-S) domains and the C-terminal head (RuvB-H) domain. The head domain binds DNA, while the ATPase domains jointly bind ATP, ADP or are empty depending on the state of the subunit in the translocation cycle. During a single DNA translocation step the structure of each domain remains the same, but their relative positions change.</text>
</comment>
<comment type="similarity">
    <text evidence="1">Belongs to the RuvB family.</text>
</comment>
<proteinExistence type="inferred from homology"/>
<protein>
    <recommendedName>
        <fullName evidence="1">Holliday junction branch migration complex subunit RuvB</fullName>
        <ecNumber evidence="1">3.6.4.-</ecNumber>
    </recommendedName>
</protein>
<keyword id="KW-0067">ATP-binding</keyword>
<keyword id="KW-0963">Cytoplasm</keyword>
<keyword id="KW-0227">DNA damage</keyword>
<keyword id="KW-0233">DNA recombination</keyword>
<keyword id="KW-0234">DNA repair</keyword>
<keyword id="KW-0238">DNA-binding</keyword>
<keyword id="KW-0378">Hydrolase</keyword>
<keyword id="KW-0547">Nucleotide-binding</keyword>
<keyword id="KW-1185">Reference proteome</keyword>
<organism>
    <name type="scientific">Nostoc sp. (strain PCC 7120 / SAG 25.82 / UTEX 2576)</name>
    <dbReference type="NCBI Taxonomy" id="103690"/>
    <lineage>
        <taxon>Bacteria</taxon>
        <taxon>Bacillati</taxon>
        <taxon>Cyanobacteriota</taxon>
        <taxon>Cyanophyceae</taxon>
        <taxon>Nostocales</taxon>
        <taxon>Nostocaceae</taxon>
        <taxon>Nostoc</taxon>
    </lineage>
</organism>
<evidence type="ECO:0000255" key="1">
    <source>
        <dbReference type="HAMAP-Rule" id="MF_00016"/>
    </source>
</evidence>
<evidence type="ECO:0000256" key="2">
    <source>
        <dbReference type="SAM" id="MobiDB-lite"/>
    </source>
</evidence>
<sequence>MAIISSKKQPPEPNGQPNKRPESAPSVPKEKVLQPEAAIDEQGKQEESIRPQRFADYIGQKDLKDVLDIAIKAAKSRGEVLDHLLLYGPPGLGKTTMAMILASEMGVNYKITSAPALERPRDIVGLLVNLKPGDILFIDEIHRLSRMTEEILYPAMEDYRLDITVGKGSSARIRSIPLSKFTLVGATTRVGALTSPLRDRFGLIQKLRFYEVDELSQIVLRSAQLLQTQVTDDGATEIARRSRGTPRIANRLLKRVRDYAQVKSCAEVSQNIAAEALQLFQVDPCGLDWTDRRMLSVIIEQFNGGPVGLETIAAATGEDTQTIEEVYEPYLMQIGYLSRTPRGRTATKAAYKHMGFTPPNEQLSLL</sequence>
<dbReference type="EC" id="3.6.4.-" evidence="1"/>
<dbReference type="EMBL" id="BA000019">
    <property type="protein sequence ID" value="BAB74593.1"/>
    <property type="molecule type" value="Genomic_DNA"/>
</dbReference>
<dbReference type="PIR" id="AG2167">
    <property type="entry name" value="AG2167"/>
</dbReference>
<dbReference type="RefSeq" id="WP_010997045.1">
    <property type="nucleotide sequence ID" value="NZ_RSCN01000003.1"/>
</dbReference>
<dbReference type="SMR" id="Q8YT32"/>
<dbReference type="STRING" id="103690.gene:10494929"/>
<dbReference type="KEGG" id="ana:all2894"/>
<dbReference type="eggNOG" id="COG2255">
    <property type="taxonomic scope" value="Bacteria"/>
</dbReference>
<dbReference type="OrthoDB" id="9804478at2"/>
<dbReference type="Proteomes" id="UP000002483">
    <property type="component" value="Chromosome"/>
</dbReference>
<dbReference type="GO" id="GO:0005737">
    <property type="term" value="C:cytoplasm"/>
    <property type="evidence" value="ECO:0007669"/>
    <property type="project" value="UniProtKB-SubCell"/>
</dbReference>
<dbReference type="GO" id="GO:0048476">
    <property type="term" value="C:Holliday junction resolvase complex"/>
    <property type="evidence" value="ECO:0007669"/>
    <property type="project" value="UniProtKB-UniRule"/>
</dbReference>
<dbReference type="GO" id="GO:0005524">
    <property type="term" value="F:ATP binding"/>
    <property type="evidence" value="ECO:0007669"/>
    <property type="project" value="UniProtKB-UniRule"/>
</dbReference>
<dbReference type="GO" id="GO:0016887">
    <property type="term" value="F:ATP hydrolysis activity"/>
    <property type="evidence" value="ECO:0007669"/>
    <property type="project" value="InterPro"/>
</dbReference>
<dbReference type="GO" id="GO:0000400">
    <property type="term" value="F:four-way junction DNA binding"/>
    <property type="evidence" value="ECO:0007669"/>
    <property type="project" value="UniProtKB-UniRule"/>
</dbReference>
<dbReference type="GO" id="GO:0009378">
    <property type="term" value="F:four-way junction helicase activity"/>
    <property type="evidence" value="ECO:0007669"/>
    <property type="project" value="InterPro"/>
</dbReference>
<dbReference type="GO" id="GO:0006310">
    <property type="term" value="P:DNA recombination"/>
    <property type="evidence" value="ECO:0007669"/>
    <property type="project" value="UniProtKB-UniRule"/>
</dbReference>
<dbReference type="GO" id="GO:0006281">
    <property type="term" value="P:DNA repair"/>
    <property type="evidence" value="ECO:0007669"/>
    <property type="project" value="UniProtKB-UniRule"/>
</dbReference>
<dbReference type="CDD" id="cd00009">
    <property type="entry name" value="AAA"/>
    <property type="match status" value="1"/>
</dbReference>
<dbReference type="Gene3D" id="1.10.8.60">
    <property type="match status" value="1"/>
</dbReference>
<dbReference type="Gene3D" id="3.40.50.300">
    <property type="entry name" value="P-loop containing nucleotide triphosphate hydrolases"/>
    <property type="match status" value="1"/>
</dbReference>
<dbReference type="Gene3D" id="1.10.10.10">
    <property type="entry name" value="Winged helix-like DNA-binding domain superfamily/Winged helix DNA-binding domain"/>
    <property type="match status" value="1"/>
</dbReference>
<dbReference type="HAMAP" id="MF_00016">
    <property type="entry name" value="DNA_HJ_migration_RuvB"/>
    <property type="match status" value="1"/>
</dbReference>
<dbReference type="InterPro" id="IPR003593">
    <property type="entry name" value="AAA+_ATPase"/>
</dbReference>
<dbReference type="InterPro" id="IPR041445">
    <property type="entry name" value="AAA_lid_4"/>
</dbReference>
<dbReference type="InterPro" id="IPR004605">
    <property type="entry name" value="DNA_helicase_Holl-junc_RuvB"/>
</dbReference>
<dbReference type="InterPro" id="IPR027417">
    <property type="entry name" value="P-loop_NTPase"/>
</dbReference>
<dbReference type="InterPro" id="IPR008824">
    <property type="entry name" value="RuvB-like_N"/>
</dbReference>
<dbReference type="InterPro" id="IPR008823">
    <property type="entry name" value="RuvB_C"/>
</dbReference>
<dbReference type="InterPro" id="IPR036388">
    <property type="entry name" value="WH-like_DNA-bd_sf"/>
</dbReference>
<dbReference type="InterPro" id="IPR036390">
    <property type="entry name" value="WH_DNA-bd_sf"/>
</dbReference>
<dbReference type="NCBIfam" id="NF000868">
    <property type="entry name" value="PRK00080.1"/>
    <property type="match status" value="1"/>
</dbReference>
<dbReference type="NCBIfam" id="TIGR00635">
    <property type="entry name" value="ruvB"/>
    <property type="match status" value="1"/>
</dbReference>
<dbReference type="PANTHER" id="PTHR42848">
    <property type="match status" value="1"/>
</dbReference>
<dbReference type="PANTHER" id="PTHR42848:SF1">
    <property type="entry name" value="HOLLIDAY JUNCTION BRANCH MIGRATION COMPLEX SUBUNIT RUVB"/>
    <property type="match status" value="1"/>
</dbReference>
<dbReference type="Pfam" id="PF17864">
    <property type="entry name" value="AAA_lid_4"/>
    <property type="match status" value="1"/>
</dbReference>
<dbReference type="Pfam" id="PF05491">
    <property type="entry name" value="RuvB_C"/>
    <property type="match status" value="1"/>
</dbReference>
<dbReference type="Pfam" id="PF05496">
    <property type="entry name" value="RuvB_N"/>
    <property type="match status" value="1"/>
</dbReference>
<dbReference type="SMART" id="SM00382">
    <property type="entry name" value="AAA"/>
    <property type="match status" value="1"/>
</dbReference>
<dbReference type="SUPFAM" id="SSF52540">
    <property type="entry name" value="P-loop containing nucleoside triphosphate hydrolases"/>
    <property type="match status" value="1"/>
</dbReference>
<dbReference type="SUPFAM" id="SSF46785">
    <property type="entry name" value="Winged helix' DNA-binding domain"/>
    <property type="match status" value="1"/>
</dbReference>
<reference key="1">
    <citation type="journal article" date="2001" name="DNA Res.">
        <title>Complete genomic sequence of the filamentous nitrogen-fixing cyanobacterium Anabaena sp. strain PCC 7120.</title>
        <authorList>
            <person name="Kaneko T."/>
            <person name="Nakamura Y."/>
            <person name="Wolk C.P."/>
            <person name="Kuritz T."/>
            <person name="Sasamoto S."/>
            <person name="Watanabe A."/>
            <person name="Iriguchi M."/>
            <person name="Ishikawa A."/>
            <person name="Kawashima K."/>
            <person name="Kimura T."/>
            <person name="Kishida Y."/>
            <person name="Kohara M."/>
            <person name="Matsumoto M."/>
            <person name="Matsuno A."/>
            <person name="Muraki A."/>
            <person name="Nakazaki N."/>
            <person name="Shimpo S."/>
            <person name="Sugimoto M."/>
            <person name="Takazawa M."/>
            <person name="Yamada M."/>
            <person name="Yasuda M."/>
            <person name="Tabata S."/>
        </authorList>
    </citation>
    <scope>NUCLEOTIDE SEQUENCE [LARGE SCALE GENOMIC DNA]</scope>
    <source>
        <strain>PCC 7120 / SAG 25.82 / UTEX 2576</strain>
    </source>
</reference>